<accession>Q746Q3</accession>
<organism>
    <name type="scientific">Geobacter sulfurreducens (strain ATCC 51573 / DSM 12127 / PCA)</name>
    <dbReference type="NCBI Taxonomy" id="243231"/>
    <lineage>
        <taxon>Bacteria</taxon>
        <taxon>Pseudomonadati</taxon>
        <taxon>Thermodesulfobacteriota</taxon>
        <taxon>Desulfuromonadia</taxon>
        <taxon>Geobacterales</taxon>
        <taxon>Geobacteraceae</taxon>
        <taxon>Geobacter</taxon>
    </lineage>
</organism>
<feature type="chain" id="PRO_0000345790" description="tRNA modification GTPase MnmE">
    <location>
        <begin position="1"/>
        <end position="456"/>
    </location>
</feature>
<feature type="domain" description="TrmE-type G">
    <location>
        <begin position="220"/>
        <end position="376"/>
    </location>
</feature>
<feature type="binding site" evidence="1">
    <location>
        <position position="23"/>
    </location>
    <ligand>
        <name>(6S)-5-formyl-5,6,7,8-tetrahydrofolate</name>
        <dbReference type="ChEBI" id="CHEBI:57457"/>
    </ligand>
</feature>
<feature type="binding site" evidence="1">
    <location>
        <position position="85"/>
    </location>
    <ligand>
        <name>(6S)-5-formyl-5,6,7,8-tetrahydrofolate</name>
        <dbReference type="ChEBI" id="CHEBI:57457"/>
    </ligand>
</feature>
<feature type="binding site" evidence="1">
    <location>
        <position position="124"/>
    </location>
    <ligand>
        <name>(6S)-5-formyl-5,6,7,8-tetrahydrofolate</name>
        <dbReference type="ChEBI" id="CHEBI:57457"/>
    </ligand>
</feature>
<feature type="binding site" evidence="1">
    <location>
        <begin position="230"/>
        <end position="235"/>
    </location>
    <ligand>
        <name>GTP</name>
        <dbReference type="ChEBI" id="CHEBI:37565"/>
    </ligand>
</feature>
<feature type="binding site" evidence="1">
    <location>
        <position position="230"/>
    </location>
    <ligand>
        <name>K(+)</name>
        <dbReference type="ChEBI" id="CHEBI:29103"/>
    </ligand>
</feature>
<feature type="binding site" evidence="1">
    <location>
        <position position="234"/>
    </location>
    <ligand>
        <name>Mg(2+)</name>
        <dbReference type="ChEBI" id="CHEBI:18420"/>
    </ligand>
</feature>
<feature type="binding site" evidence="1">
    <location>
        <begin position="249"/>
        <end position="255"/>
    </location>
    <ligand>
        <name>GTP</name>
        <dbReference type="ChEBI" id="CHEBI:37565"/>
    </ligand>
</feature>
<feature type="binding site" evidence="1">
    <location>
        <position position="249"/>
    </location>
    <ligand>
        <name>K(+)</name>
        <dbReference type="ChEBI" id="CHEBI:29103"/>
    </ligand>
</feature>
<feature type="binding site" evidence="1">
    <location>
        <position position="251"/>
    </location>
    <ligand>
        <name>K(+)</name>
        <dbReference type="ChEBI" id="CHEBI:29103"/>
    </ligand>
</feature>
<feature type="binding site" evidence="1">
    <location>
        <position position="254"/>
    </location>
    <ligand>
        <name>K(+)</name>
        <dbReference type="ChEBI" id="CHEBI:29103"/>
    </ligand>
</feature>
<feature type="binding site" evidence="1">
    <location>
        <position position="255"/>
    </location>
    <ligand>
        <name>Mg(2+)</name>
        <dbReference type="ChEBI" id="CHEBI:18420"/>
    </ligand>
</feature>
<feature type="binding site" evidence="1">
    <location>
        <begin position="274"/>
        <end position="277"/>
    </location>
    <ligand>
        <name>GTP</name>
        <dbReference type="ChEBI" id="CHEBI:37565"/>
    </ligand>
</feature>
<feature type="binding site" evidence="1">
    <location>
        <position position="456"/>
    </location>
    <ligand>
        <name>(6S)-5-formyl-5,6,7,8-tetrahydrofolate</name>
        <dbReference type="ChEBI" id="CHEBI:57457"/>
    </ligand>
</feature>
<evidence type="ECO:0000255" key="1">
    <source>
        <dbReference type="HAMAP-Rule" id="MF_00379"/>
    </source>
</evidence>
<gene>
    <name evidence="1" type="primary">mnmE</name>
    <name evidence="1" type="synonym">trmE</name>
    <name type="ordered locus">GSU3465</name>
</gene>
<proteinExistence type="inferred from homology"/>
<comment type="function">
    <text evidence="1">Exhibits a very high intrinsic GTPase hydrolysis rate. Involved in the addition of a carboxymethylaminomethyl (cmnm) group at the wobble position (U34) of certain tRNAs, forming tRNA-cmnm(5)s(2)U34.</text>
</comment>
<comment type="cofactor">
    <cofactor evidence="1">
        <name>K(+)</name>
        <dbReference type="ChEBI" id="CHEBI:29103"/>
    </cofactor>
    <text evidence="1">Binds 1 potassium ion per subunit.</text>
</comment>
<comment type="subunit">
    <text evidence="1">Homodimer. Heterotetramer of two MnmE and two MnmG subunits.</text>
</comment>
<comment type="subcellular location">
    <subcellularLocation>
        <location evidence="1">Cytoplasm</location>
    </subcellularLocation>
</comment>
<comment type="similarity">
    <text evidence="1">Belongs to the TRAFAC class TrmE-Era-EngA-EngB-Septin-like GTPase superfamily. TrmE GTPase family.</text>
</comment>
<reference key="1">
    <citation type="journal article" date="2003" name="Science">
        <title>Genome of Geobacter sulfurreducens: metal reduction in subsurface environments.</title>
        <authorList>
            <person name="Methe B.A."/>
            <person name="Nelson K.E."/>
            <person name="Eisen J.A."/>
            <person name="Paulsen I.T."/>
            <person name="Nelson W.C."/>
            <person name="Heidelberg J.F."/>
            <person name="Wu D."/>
            <person name="Wu M."/>
            <person name="Ward N.L."/>
            <person name="Beanan M.J."/>
            <person name="Dodson R.J."/>
            <person name="Madupu R."/>
            <person name="Brinkac L.M."/>
            <person name="Daugherty S.C."/>
            <person name="DeBoy R.T."/>
            <person name="Durkin A.S."/>
            <person name="Gwinn M.L."/>
            <person name="Kolonay J.F."/>
            <person name="Sullivan S.A."/>
            <person name="Haft D.H."/>
            <person name="Selengut J."/>
            <person name="Davidsen T.M."/>
            <person name="Zafar N."/>
            <person name="White O."/>
            <person name="Tran B."/>
            <person name="Romero C."/>
            <person name="Forberger H.A."/>
            <person name="Weidman J.F."/>
            <person name="Khouri H.M."/>
            <person name="Feldblyum T.V."/>
            <person name="Utterback T.R."/>
            <person name="Van Aken S.E."/>
            <person name="Lovley D.R."/>
            <person name="Fraser C.M."/>
        </authorList>
    </citation>
    <scope>NUCLEOTIDE SEQUENCE [LARGE SCALE GENOMIC DNA]</scope>
    <source>
        <strain>ATCC 51573 / DSM 12127 / PCA</strain>
    </source>
</reference>
<protein>
    <recommendedName>
        <fullName evidence="1">tRNA modification GTPase MnmE</fullName>
        <ecNumber evidence="1">3.6.-.-</ecNumber>
    </recommendedName>
</protein>
<keyword id="KW-0963">Cytoplasm</keyword>
<keyword id="KW-0342">GTP-binding</keyword>
<keyword id="KW-0378">Hydrolase</keyword>
<keyword id="KW-0460">Magnesium</keyword>
<keyword id="KW-0479">Metal-binding</keyword>
<keyword id="KW-0547">Nucleotide-binding</keyword>
<keyword id="KW-0630">Potassium</keyword>
<keyword id="KW-1185">Reference proteome</keyword>
<keyword id="KW-0819">tRNA processing</keyword>
<sequence length="456" mass="49708">MYVEDTIAAISTAAGEGGVGIVRVSGPDAPSIARRVFRRGSNGDFESHRFYYGSVVDAVTGEAVDEAMAVLMVRPRSYTREDVLEIQCHGGYLVTRRVLELVLAAGARLAEPGEFTRRAFLNGRIDLVQAEAVIDVIRAKTDAALALAQHQRQGRLSQRLDTVMAELRQALALVEAFIDFPEDDIDPAAQDALTVHVRKAAETVGELIAGFDEGRVLREGVAVLIAGKPNVGKSSLLNTLLQEKRAIVTSVPGTTRDIIEEVVNIRGLPLRMIDTAGIRDTEDIVEKEGVRLTLEKIPEADLVLLVIDGSRPLDEDDRMILSALAGKRLILVENKCDLPRAVQIPDELVLMPRVTVSTSRGDGIDELKESIFQTFIHGAAIDSREYVAVSRVRHRDLLSRSTMHLTAFEQGLASGFTLELLAVELRDALAAVGEVTGETTPDDILDVIFDRFCIGK</sequence>
<name>MNME_GEOSL</name>
<dbReference type="EC" id="3.6.-.-" evidence="1"/>
<dbReference type="EMBL" id="AE017180">
    <property type="protein sequence ID" value="AAR36855.1"/>
    <property type="molecule type" value="Genomic_DNA"/>
</dbReference>
<dbReference type="RefSeq" id="NP_954505.1">
    <property type="nucleotide sequence ID" value="NC_002939.5"/>
</dbReference>
<dbReference type="RefSeq" id="WP_010944074.1">
    <property type="nucleotide sequence ID" value="NC_002939.5"/>
</dbReference>
<dbReference type="SMR" id="Q746Q3"/>
<dbReference type="FunCoup" id="Q746Q3">
    <property type="interactions" value="554"/>
</dbReference>
<dbReference type="STRING" id="243231.GSU3465"/>
<dbReference type="EnsemblBacteria" id="AAR36855">
    <property type="protein sequence ID" value="AAR36855"/>
    <property type="gene ID" value="GSU3465"/>
</dbReference>
<dbReference type="KEGG" id="gsu:GSU3465"/>
<dbReference type="PATRIC" id="fig|243231.5.peg.3487"/>
<dbReference type="eggNOG" id="COG0486">
    <property type="taxonomic scope" value="Bacteria"/>
</dbReference>
<dbReference type="HOGENOM" id="CLU_019624_4_1_7"/>
<dbReference type="InParanoid" id="Q746Q3"/>
<dbReference type="OrthoDB" id="9805918at2"/>
<dbReference type="Proteomes" id="UP000000577">
    <property type="component" value="Chromosome"/>
</dbReference>
<dbReference type="GO" id="GO:0005737">
    <property type="term" value="C:cytoplasm"/>
    <property type="evidence" value="ECO:0000318"/>
    <property type="project" value="GO_Central"/>
</dbReference>
<dbReference type="GO" id="GO:0005829">
    <property type="term" value="C:cytosol"/>
    <property type="evidence" value="ECO:0000318"/>
    <property type="project" value="GO_Central"/>
</dbReference>
<dbReference type="GO" id="GO:0005525">
    <property type="term" value="F:GTP binding"/>
    <property type="evidence" value="ECO:0007669"/>
    <property type="project" value="UniProtKB-UniRule"/>
</dbReference>
<dbReference type="GO" id="GO:0003924">
    <property type="term" value="F:GTPase activity"/>
    <property type="evidence" value="ECO:0007669"/>
    <property type="project" value="UniProtKB-UniRule"/>
</dbReference>
<dbReference type="GO" id="GO:0046872">
    <property type="term" value="F:metal ion binding"/>
    <property type="evidence" value="ECO:0007669"/>
    <property type="project" value="UniProtKB-KW"/>
</dbReference>
<dbReference type="GO" id="GO:0030488">
    <property type="term" value="P:tRNA methylation"/>
    <property type="evidence" value="ECO:0000318"/>
    <property type="project" value="GO_Central"/>
</dbReference>
<dbReference type="GO" id="GO:0002098">
    <property type="term" value="P:tRNA wobble uridine modification"/>
    <property type="evidence" value="ECO:0000318"/>
    <property type="project" value="GO_Central"/>
</dbReference>
<dbReference type="CDD" id="cd04164">
    <property type="entry name" value="trmE"/>
    <property type="match status" value="1"/>
</dbReference>
<dbReference type="CDD" id="cd14858">
    <property type="entry name" value="TrmE_N"/>
    <property type="match status" value="1"/>
</dbReference>
<dbReference type="FunFam" id="3.30.1360.120:FF:000003">
    <property type="entry name" value="tRNA modification GTPase MnmE"/>
    <property type="match status" value="1"/>
</dbReference>
<dbReference type="FunFam" id="3.40.50.300:FF:000494">
    <property type="entry name" value="tRNA modification GTPase MnmE"/>
    <property type="match status" value="1"/>
</dbReference>
<dbReference type="Gene3D" id="3.40.50.300">
    <property type="entry name" value="P-loop containing nucleotide triphosphate hydrolases"/>
    <property type="match status" value="1"/>
</dbReference>
<dbReference type="Gene3D" id="3.30.1360.120">
    <property type="entry name" value="Probable tRNA modification gtpase trme, domain 1"/>
    <property type="match status" value="1"/>
</dbReference>
<dbReference type="Gene3D" id="1.20.120.430">
    <property type="entry name" value="tRNA modification GTPase MnmE domain 2"/>
    <property type="match status" value="1"/>
</dbReference>
<dbReference type="HAMAP" id="MF_00379">
    <property type="entry name" value="GTPase_MnmE"/>
    <property type="match status" value="1"/>
</dbReference>
<dbReference type="InterPro" id="IPR031168">
    <property type="entry name" value="G_TrmE"/>
</dbReference>
<dbReference type="InterPro" id="IPR006073">
    <property type="entry name" value="GTP-bd"/>
</dbReference>
<dbReference type="InterPro" id="IPR018948">
    <property type="entry name" value="GTP-bd_TrmE_N"/>
</dbReference>
<dbReference type="InterPro" id="IPR004520">
    <property type="entry name" value="GTPase_MnmE"/>
</dbReference>
<dbReference type="InterPro" id="IPR027368">
    <property type="entry name" value="MnmE_dom2"/>
</dbReference>
<dbReference type="InterPro" id="IPR025867">
    <property type="entry name" value="MnmE_helical"/>
</dbReference>
<dbReference type="InterPro" id="IPR027417">
    <property type="entry name" value="P-loop_NTPase"/>
</dbReference>
<dbReference type="InterPro" id="IPR005225">
    <property type="entry name" value="Small_GTP-bd"/>
</dbReference>
<dbReference type="InterPro" id="IPR027266">
    <property type="entry name" value="TrmE/GcvT_dom1"/>
</dbReference>
<dbReference type="NCBIfam" id="TIGR00450">
    <property type="entry name" value="mnmE_trmE_thdF"/>
    <property type="match status" value="1"/>
</dbReference>
<dbReference type="NCBIfam" id="NF003661">
    <property type="entry name" value="PRK05291.1-3"/>
    <property type="match status" value="1"/>
</dbReference>
<dbReference type="NCBIfam" id="TIGR00231">
    <property type="entry name" value="small_GTP"/>
    <property type="match status" value="1"/>
</dbReference>
<dbReference type="PANTHER" id="PTHR42714">
    <property type="entry name" value="TRNA MODIFICATION GTPASE GTPBP3"/>
    <property type="match status" value="1"/>
</dbReference>
<dbReference type="PANTHER" id="PTHR42714:SF2">
    <property type="entry name" value="TRNA MODIFICATION GTPASE GTPBP3, MITOCHONDRIAL"/>
    <property type="match status" value="1"/>
</dbReference>
<dbReference type="Pfam" id="PF01926">
    <property type="entry name" value="MMR_HSR1"/>
    <property type="match status" value="1"/>
</dbReference>
<dbReference type="Pfam" id="PF12631">
    <property type="entry name" value="MnmE_helical"/>
    <property type="match status" value="1"/>
</dbReference>
<dbReference type="Pfam" id="PF10396">
    <property type="entry name" value="TrmE_N"/>
    <property type="match status" value="1"/>
</dbReference>
<dbReference type="SUPFAM" id="SSF52540">
    <property type="entry name" value="P-loop containing nucleoside triphosphate hydrolases"/>
    <property type="match status" value="1"/>
</dbReference>
<dbReference type="PROSITE" id="PS51709">
    <property type="entry name" value="G_TRME"/>
    <property type="match status" value="1"/>
</dbReference>